<evidence type="ECO:0000255" key="1">
    <source>
        <dbReference type="HAMAP-Rule" id="MF_00693"/>
    </source>
</evidence>
<reference key="1">
    <citation type="journal article" date="2008" name="Appl. Environ. Microbiol.">
        <title>Genome of the epsilonproteobacterial chemolithoautotroph Sulfurimonas denitrificans.</title>
        <authorList>
            <person name="Sievert S.M."/>
            <person name="Scott K.M."/>
            <person name="Klotz M.G."/>
            <person name="Chain P.S.G."/>
            <person name="Hauser L.J."/>
            <person name="Hemp J."/>
            <person name="Huegler M."/>
            <person name="Land M."/>
            <person name="Lapidus A."/>
            <person name="Larimer F.W."/>
            <person name="Lucas S."/>
            <person name="Malfatti S.A."/>
            <person name="Meyer F."/>
            <person name="Paulsen I.T."/>
            <person name="Ren Q."/>
            <person name="Simon J."/>
            <person name="Bailey K."/>
            <person name="Diaz E."/>
            <person name="Fitzpatrick K.A."/>
            <person name="Glover B."/>
            <person name="Gwatney N."/>
            <person name="Korajkic A."/>
            <person name="Long A."/>
            <person name="Mobberley J.M."/>
            <person name="Pantry S.N."/>
            <person name="Pazder G."/>
            <person name="Peterson S."/>
            <person name="Quintanilla J.D."/>
            <person name="Sprinkle R."/>
            <person name="Stephens J."/>
            <person name="Thomas P."/>
            <person name="Vaughn R."/>
            <person name="Weber M.J."/>
            <person name="Wooten L.L."/>
        </authorList>
    </citation>
    <scope>NUCLEOTIDE SEQUENCE [LARGE SCALE GENOMIC DNA]</scope>
    <source>
        <strain>ATCC 33889 / DSM 1251</strain>
    </source>
</reference>
<sequence length="236" mass="26461">MGRAFEYRKASKLKRWGAMSKLFPKLGKIITMAAKEGGSDPDMNARLRTAIINAKAENMPKDNIEAAIKRATSKDTASMLEVSFEAKAPHGAQFFIECMTDNNTRTVANVKNILTKHGAEMLTKGSLEFMFDRKAIFEFALKDNMDLEELELELIDAGLEEIEEEDGVVIISTDYKNFGSLNSALEDMKIEIIKANLERMATSPISLTEQQQADIERIIDKLEDDEDVQKVFTNIA</sequence>
<keyword id="KW-0963">Cytoplasm</keyword>
<keyword id="KW-0238">DNA-binding</keyword>
<keyword id="KW-1185">Reference proteome</keyword>
<keyword id="KW-0804">Transcription</keyword>
<keyword id="KW-0805">Transcription regulation</keyword>
<comment type="subcellular location">
    <subcellularLocation>
        <location evidence="1">Cytoplasm</location>
    </subcellularLocation>
</comment>
<comment type="similarity">
    <text evidence="1">Belongs to the TACO1 family.</text>
</comment>
<gene>
    <name type="ordered locus">Suden_1389</name>
</gene>
<name>Y1389_SULDN</name>
<proteinExistence type="inferred from homology"/>
<feature type="chain" id="PRO_0000257156" description="Probable transcriptional regulatory protein Suden_1389">
    <location>
        <begin position="1"/>
        <end position="236"/>
    </location>
</feature>
<organism>
    <name type="scientific">Sulfurimonas denitrificans (strain ATCC 33889 / DSM 1251)</name>
    <name type="common">Thiomicrospira denitrificans (strain ATCC 33889 / DSM 1251)</name>
    <dbReference type="NCBI Taxonomy" id="326298"/>
    <lineage>
        <taxon>Bacteria</taxon>
        <taxon>Pseudomonadati</taxon>
        <taxon>Campylobacterota</taxon>
        <taxon>Epsilonproteobacteria</taxon>
        <taxon>Campylobacterales</taxon>
        <taxon>Sulfurimonadaceae</taxon>
        <taxon>Sulfurimonas</taxon>
    </lineage>
</organism>
<accession>Q30QR5</accession>
<protein>
    <recommendedName>
        <fullName evidence="1">Probable transcriptional regulatory protein Suden_1389</fullName>
    </recommendedName>
</protein>
<dbReference type="EMBL" id="CP000153">
    <property type="protein sequence ID" value="ABB44666.1"/>
    <property type="molecule type" value="Genomic_DNA"/>
</dbReference>
<dbReference type="RefSeq" id="WP_011373018.1">
    <property type="nucleotide sequence ID" value="NC_007575.1"/>
</dbReference>
<dbReference type="SMR" id="Q30QR5"/>
<dbReference type="STRING" id="326298.Suden_1389"/>
<dbReference type="KEGG" id="tdn:Suden_1389"/>
<dbReference type="eggNOG" id="COG0217">
    <property type="taxonomic scope" value="Bacteria"/>
</dbReference>
<dbReference type="HOGENOM" id="CLU_062974_2_2_7"/>
<dbReference type="OrthoDB" id="9781053at2"/>
<dbReference type="Proteomes" id="UP000002714">
    <property type="component" value="Chromosome"/>
</dbReference>
<dbReference type="GO" id="GO:0005829">
    <property type="term" value="C:cytosol"/>
    <property type="evidence" value="ECO:0007669"/>
    <property type="project" value="TreeGrafter"/>
</dbReference>
<dbReference type="GO" id="GO:0003677">
    <property type="term" value="F:DNA binding"/>
    <property type="evidence" value="ECO:0007669"/>
    <property type="project" value="UniProtKB-UniRule"/>
</dbReference>
<dbReference type="GO" id="GO:0006355">
    <property type="term" value="P:regulation of DNA-templated transcription"/>
    <property type="evidence" value="ECO:0007669"/>
    <property type="project" value="UniProtKB-UniRule"/>
</dbReference>
<dbReference type="FunFam" id="1.10.10.200:FF:000004">
    <property type="entry name" value="Probable transcriptional regulatory protein BSBG_02618"/>
    <property type="match status" value="1"/>
</dbReference>
<dbReference type="Gene3D" id="1.10.10.200">
    <property type="match status" value="1"/>
</dbReference>
<dbReference type="Gene3D" id="3.30.70.980">
    <property type="match status" value="2"/>
</dbReference>
<dbReference type="HAMAP" id="MF_00693">
    <property type="entry name" value="Transcrip_reg_TACO1"/>
    <property type="match status" value="1"/>
</dbReference>
<dbReference type="InterPro" id="IPR017856">
    <property type="entry name" value="Integrase-like_N"/>
</dbReference>
<dbReference type="InterPro" id="IPR048300">
    <property type="entry name" value="TACO1_YebC-like_2nd/3rd_dom"/>
</dbReference>
<dbReference type="InterPro" id="IPR049083">
    <property type="entry name" value="TACO1_YebC_N"/>
</dbReference>
<dbReference type="InterPro" id="IPR002876">
    <property type="entry name" value="Transcrip_reg_TACO1-like"/>
</dbReference>
<dbReference type="InterPro" id="IPR026564">
    <property type="entry name" value="Transcrip_reg_TACO1-like_dom3"/>
</dbReference>
<dbReference type="InterPro" id="IPR029072">
    <property type="entry name" value="YebC-like"/>
</dbReference>
<dbReference type="NCBIfam" id="NF009044">
    <property type="entry name" value="PRK12378.1"/>
    <property type="match status" value="1"/>
</dbReference>
<dbReference type="NCBIfam" id="TIGR01033">
    <property type="entry name" value="YebC/PmpR family DNA-binding transcriptional regulator"/>
    <property type="match status" value="1"/>
</dbReference>
<dbReference type="PANTHER" id="PTHR12532:SF6">
    <property type="entry name" value="TRANSCRIPTIONAL REGULATORY PROTEIN YEBC-RELATED"/>
    <property type="match status" value="1"/>
</dbReference>
<dbReference type="PANTHER" id="PTHR12532">
    <property type="entry name" value="TRANSLATIONAL ACTIVATOR OF CYTOCHROME C OXIDASE 1"/>
    <property type="match status" value="1"/>
</dbReference>
<dbReference type="Pfam" id="PF20772">
    <property type="entry name" value="TACO1_YebC_N"/>
    <property type="match status" value="1"/>
</dbReference>
<dbReference type="Pfam" id="PF01709">
    <property type="entry name" value="Transcrip_reg"/>
    <property type="match status" value="1"/>
</dbReference>
<dbReference type="SUPFAM" id="SSF75625">
    <property type="entry name" value="YebC-like"/>
    <property type="match status" value="1"/>
</dbReference>